<sequence>MNYPNGKPYRKNSAIDGGKKTAAFSNIEYGGRGMSLEKDIEHSNTFYLKSDIAVIHKKPTPVQIVNVNYPKRSKAVINEAYFRTPSTTDYNGVYQGYYIDFEAKETKNKTSFPLNNIHDHQVEHMKNAYQQKGIVFLMIRFKTLDEVYLLPYSKFEVFWKRYKDNIKKSITVDEIRKNGYHIPYQYQPRLDYLKAVDKLILDESEDRV</sequence>
<reference key="1">
    <citation type="submission" date="2007-06" db="EMBL/GenBank/DDBJ databases">
        <title>Complete sequence of chromosome of Staphylococcus aureus subsp. aureus JH1.</title>
        <authorList>
            <consortium name="US DOE Joint Genome Institute"/>
            <person name="Copeland A."/>
            <person name="Lucas S."/>
            <person name="Lapidus A."/>
            <person name="Barry K."/>
            <person name="Detter J.C."/>
            <person name="Glavina del Rio T."/>
            <person name="Hammon N."/>
            <person name="Israni S."/>
            <person name="Dalin E."/>
            <person name="Tice H."/>
            <person name="Pitluck S."/>
            <person name="Chain P."/>
            <person name="Malfatti S."/>
            <person name="Shin M."/>
            <person name="Vergez L."/>
            <person name="Schmutz J."/>
            <person name="Larimer F."/>
            <person name="Land M."/>
            <person name="Hauser L."/>
            <person name="Kyrpides N."/>
            <person name="Ivanova N."/>
            <person name="Tomasz A."/>
            <person name="Richardson P."/>
        </authorList>
    </citation>
    <scope>NUCLEOTIDE SEQUENCE [LARGE SCALE GENOMIC DNA]</scope>
    <source>
        <strain>JH1</strain>
    </source>
</reference>
<gene>
    <name evidence="1" type="primary">recU</name>
    <name type="ordered locus">SaurJH1_1537</name>
</gene>
<proteinExistence type="inferred from homology"/>
<feature type="chain" id="PRO_1000076340" description="Holliday junction resolvase RecU">
    <location>
        <begin position="1"/>
        <end position="208"/>
    </location>
</feature>
<feature type="binding site" evidence="1">
    <location>
        <position position="87"/>
    </location>
    <ligand>
        <name>Mg(2+)</name>
        <dbReference type="ChEBI" id="CHEBI:18420"/>
    </ligand>
</feature>
<feature type="binding site" evidence="1">
    <location>
        <position position="89"/>
    </location>
    <ligand>
        <name>Mg(2+)</name>
        <dbReference type="ChEBI" id="CHEBI:18420"/>
    </ligand>
</feature>
<feature type="binding site" evidence="1">
    <location>
        <position position="102"/>
    </location>
    <ligand>
        <name>Mg(2+)</name>
        <dbReference type="ChEBI" id="CHEBI:18420"/>
    </ligand>
</feature>
<feature type="binding site" evidence="1">
    <location>
        <position position="121"/>
    </location>
    <ligand>
        <name>Mg(2+)</name>
        <dbReference type="ChEBI" id="CHEBI:18420"/>
    </ligand>
</feature>
<feature type="site" description="Transition state stabilizer" evidence="1">
    <location>
        <position position="104"/>
    </location>
</feature>
<dbReference type="EC" id="3.1.21.10" evidence="1"/>
<dbReference type="EMBL" id="CP000736">
    <property type="protein sequence ID" value="ABR52386.1"/>
    <property type="molecule type" value="Genomic_DNA"/>
</dbReference>
<dbReference type="SMR" id="A6U1R8"/>
<dbReference type="KEGG" id="sah:SaurJH1_1537"/>
<dbReference type="HOGENOM" id="CLU_096340_0_0_9"/>
<dbReference type="GO" id="GO:0005737">
    <property type="term" value="C:cytoplasm"/>
    <property type="evidence" value="ECO:0007669"/>
    <property type="project" value="UniProtKB-SubCell"/>
</dbReference>
<dbReference type="GO" id="GO:0004519">
    <property type="term" value="F:endonuclease activity"/>
    <property type="evidence" value="ECO:0007669"/>
    <property type="project" value="UniProtKB-UniRule"/>
</dbReference>
<dbReference type="GO" id="GO:0000287">
    <property type="term" value="F:magnesium ion binding"/>
    <property type="evidence" value="ECO:0007669"/>
    <property type="project" value="UniProtKB-UniRule"/>
</dbReference>
<dbReference type="GO" id="GO:0003676">
    <property type="term" value="F:nucleic acid binding"/>
    <property type="evidence" value="ECO:0007669"/>
    <property type="project" value="InterPro"/>
</dbReference>
<dbReference type="GO" id="GO:0007059">
    <property type="term" value="P:chromosome segregation"/>
    <property type="evidence" value="ECO:0007669"/>
    <property type="project" value="UniProtKB-UniRule"/>
</dbReference>
<dbReference type="GO" id="GO:0006310">
    <property type="term" value="P:DNA recombination"/>
    <property type="evidence" value="ECO:0007669"/>
    <property type="project" value="UniProtKB-UniRule"/>
</dbReference>
<dbReference type="GO" id="GO:0006281">
    <property type="term" value="P:DNA repair"/>
    <property type="evidence" value="ECO:0007669"/>
    <property type="project" value="UniProtKB-UniRule"/>
</dbReference>
<dbReference type="CDD" id="cd22354">
    <property type="entry name" value="RecU-like"/>
    <property type="match status" value="1"/>
</dbReference>
<dbReference type="Gene3D" id="3.40.1350.10">
    <property type="match status" value="1"/>
</dbReference>
<dbReference type="HAMAP" id="MF_00130">
    <property type="entry name" value="RecU"/>
    <property type="match status" value="1"/>
</dbReference>
<dbReference type="InterPro" id="IPR004612">
    <property type="entry name" value="Resolv_RecU"/>
</dbReference>
<dbReference type="InterPro" id="IPR011335">
    <property type="entry name" value="Restrct_endonuc-II-like"/>
</dbReference>
<dbReference type="InterPro" id="IPR011856">
    <property type="entry name" value="tRNA_endonuc-like_dom_sf"/>
</dbReference>
<dbReference type="NCBIfam" id="NF002581">
    <property type="entry name" value="PRK02234.1-2"/>
    <property type="match status" value="1"/>
</dbReference>
<dbReference type="NCBIfam" id="NF002583">
    <property type="entry name" value="PRK02234.1-4"/>
    <property type="match status" value="1"/>
</dbReference>
<dbReference type="NCBIfam" id="NF002584">
    <property type="entry name" value="PRK02234.1-5"/>
    <property type="match status" value="1"/>
</dbReference>
<dbReference type="NCBIfam" id="TIGR00648">
    <property type="entry name" value="recU"/>
    <property type="match status" value="1"/>
</dbReference>
<dbReference type="Pfam" id="PF03838">
    <property type="entry name" value="RecU"/>
    <property type="match status" value="1"/>
</dbReference>
<dbReference type="PIRSF" id="PIRSF037785">
    <property type="entry name" value="RecU"/>
    <property type="match status" value="1"/>
</dbReference>
<dbReference type="SUPFAM" id="SSF52980">
    <property type="entry name" value="Restriction endonuclease-like"/>
    <property type="match status" value="1"/>
</dbReference>
<evidence type="ECO:0000255" key="1">
    <source>
        <dbReference type="HAMAP-Rule" id="MF_00130"/>
    </source>
</evidence>
<accession>A6U1R8</accession>
<comment type="function">
    <text evidence="1">Endonuclease that resolves Holliday junction intermediates in genetic recombination. Cleaves mobile four-strand junctions by introducing symmetrical nicks in paired strands. Promotes annealing of linear ssDNA with homologous dsDNA. Required for DNA repair, homologous recombination and chromosome segregation.</text>
</comment>
<comment type="catalytic activity">
    <reaction evidence="1">
        <text>Endonucleolytic cleavage at a junction such as a reciprocal single-stranded crossover between two homologous DNA duplexes (Holliday junction).</text>
        <dbReference type="EC" id="3.1.21.10"/>
    </reaction>
</comment>
<comment type="cofactor">
    <cofactor evidence="1">
        <name>Mg(2+)</name>
        <dbReference type="ChEBI" id="CHEBI:18420"/>
    </cofactor>
    <text evidence="1">Binds 1 Mg(2+) ion per subunit.</text>
</comment>
<comment type="subcellular location">
    <subcellularLocation>
        <location evidence="1">Cytoplasm</location>
    </subcellularLocation>
</comment>
<comment type="similarity">
    <text evidence="1">Belongs to the RecU family.</text>
</comment>
<name>RECU_STAA2</name>
<organism>
    <name type="scientific">Staphylococcus aureus (strain JH1)</name>
    <dbReference type="NCBI Taxonomy" id="359787"/>
    <lineage>
        <taxon>Bacteria</taxon>
        <taxon>Bacillati</taxon>
        <taxon>Bacillota</taxon>
        <taxon>Bacilli</taxon>
        <taxon>Bacillales</taxon>
        <taxon>Staphylococcaceae</taxon>
        <taxon>Staphylococcus</taxon>
    </lineage>
</organism>
<protein>
    <recommendedName>
        <fullName evidence="1">Holliday junction resolvase RecU</fullName>
        <ecNumber evidence="1">3.1.21.10</ecNumber>
    </recommendedName>
    <alternativeName>
        <fullName evidence="1">Recombination protein U homolog</fullName>
    </alternativeName>
</protein>
<keyword id="KW-0963">Cytoplasm</keyword>
<keyword id="KW-0227">DNA damage</keyword>
<keyword id="KW-0233">DNA recombination</keyword>
<keyword id="KW-0234">DNA repair</keyword>
<keyword id="KW-0255">Endonuclease</keyword>
<keyword id="KW-0378">Hydrolase</keyword>
<keyword id="KW-0460">Magnesium</keyword>
<keyword id="KW-0479">Metal-binding</keyword>
<keyword id="KW-0540">Nuclease</keyword>